<name>ARLY_SHIF8</name>
<proteinExistence type="inferred from homology"/>
<reference key="1">
    <citation type="journal article" date="2006" name="BMC Genomics">
        <title>Complete genome sequence of Shigella flexneri 5b and comparison with Shigella flexneri 2a.</title>
        <authorList>
            <person name="Nie H."/>
            <person name="Yang F."/>
            <person name="Zhang X."/>
            <person name="Yang J."/>
            <person name="Chen L."/>
            <person name="Wang J."/>
            <person name="Xiong Z."/>
            <person name="Peng J."/>
            <person name="Sun L."/>
            <person name="Dong J."/>
            <person name="Xue Y."/>
            <person name="Xu X."/>
            <person name="Chen S."/>
            <person name="Yao Z."/>
            <person name="Shen Y."/>
            <person name="Jin Q."/>
        </authorList>
    </citation>
    <scope>NUCLEOTIDE SEQUENCE [LARGE SCALE GENOMIC DNA]</scope>
    <source>
        <strain>8401</strain>
    </source>
</reference>
<evidence type="ECO:0000255" key="1">
    <source>
        <dbReference type="HAMAP-Rule" id="MF_00006"/>
    </source>
</evidence>
<sequence>MALWGGRFTQAADQRFKQFNDSLRFDYRLAEQDIVGSVAWSKALVTVGVLTAEEQAQLEEALNVLLEDVRARPQQILESDAEDIHSWVEGKLIDKVGQLGKKLHTGRSRNDQVATDLKLWCKDTVSELLTANRQLQSALVETAQNNQDAVMPGYTHLQRAQPVTFAHWCLAYVEMLARDESRLQDALKRLDVSPLGCGALAGTAYEIDREQLAGWLGFASATRNSLDSVSDRDHVLELLSAAAIGMVHLSRFAEDLIFFNTGEAGFVELSDRVTSGSSLMPQKKNPDALELIRGKCGRVQGALTGMMMTLKGLPLAYNKDMQEDKEGLFDALDTWLDCLHMAALVLDGIQVKRPRCQEAAQQGYANATELADYLVAKGVPFREAHHIVGEAVVEAIRQGKPLEDLPLSELQKFSQVIGEDVYPILSLQSCLEKRAAKGGVSPQQVAQAIAFAQARLE</sequence>
<keyword id="KW-0028">Amino-acid biosynthesis</keyword>
<keyword id="KW-0055">Arginine biosynthesis</keyword>
<keyword id="KW-0963">Cytoplasm</keyword>
<keyword id="KW-0456">Lyase</keyword>
<dbReference type="EC" id="4.3.2.1" evidence="1"/>
<dbReference type="EMBL" id="CP000266">
    <property type="protein sequence ID" value="ABF06031.1"/>
    <property type="molecule type" value="Genomic_DNA"/>
</dbReference>
<dbReference type="RefSeq" id="WP_001230091.1">
    <property type="nucleotide sequence ID" value="NC_008258.1"/>
</dbReference>
<dbReference type="SMR" id="Q0SY34"/>
<dbReference type="KEGG" id="sfv:SFV_4029"/>
<dbReference type="HOGENOM" id="CLU_027272_2_3_6"/>
<dbReference type="UniPathway" id="UPA00068">
    <property type="reaction ID" value="UER00114"/>
</dbReference>
<dbReference type="Proteomes" id="UP000000659">
    <property type="component" value="Chromosome"/>
</dbReference>
<dbReference type="GO" id="GO:0005829">
    <property type="term" value="C:cytosol"/>
    <property type="evidence" value="ECO:0007669"/>
    <property type="project" value="TreeGrafter"/>
</dbReference>
<dbReference type="GO" id="GO:0004056">
    <property type="term" value="F:argininosuccinate lyase activity"/>
    <property type="evidence" value="ECO:0007669"/>
    <property type="project" value="UniProtKB-UniRule"/>
</dbReference>
<dbReference type="GO" id="GO:0042450">
    <property type="term" value="P:arginine biosynthetic process via ornithine"/>
    <property type="evidence" value="ECO:0007669"/>
    <property type="project" value="InterPro"/>
</dbReference>
<dbReference type="GO" id="GO:0006526">
    <property type="term" value="P:L-arginine biosynthetic process"/>
    <property type="evidence" value="ECO:0007669"/>
    <property type="project" value="UniProtKB-UniRule"/>
</dbReference>
<dbReference type="CDD" id="cd01359">
    <property type="entry name" value="Argininosuccinate_lyase"/>
    <property type="match status" value="1"/>
</dbReference>
<dbReference type="FunFam" id="1.10.275.10:FF:000004">
    <property type="entry name" value="Argininosuccinate lyase"/>
    <property type="match status" value="1"/>
</dbReference>
<dbReference type="FunFam" id="1.10.40.30:FF:000001">
    <property type="entry name" value="Argininosuccinate lyase"/>
    <property type="match status" value="1"/>
</dbReference>
<dbReference type="FunFam" id="1.20.200.10:FF:000006">
    <property type="entry name" value="Argininosuccinate lyase"/>
    <property type="match status" value="1"/>
</dbReference>
<dbReference type="Gene3D" id="1.10.40.30">
    <property type="entry name" value="Fumarase/aspartase (C-terminal domain)"/>
    <property type="match status" value="1"/>
</dbReference>
<dbReference type="Gene3D" id="1.20.200.10">
    <property type="entry name" value="Fumarase/aspartase (Central domain)"/>
    <property type="match status" value="1"/>
</dbReference>
<dbReference type="Gene3D" id="1.10.275.10">
    <property type="entry name" value="Fumarase/aspartase (N-terminal domain)"/>
    <property type="match status" value="1"/>
</dbReference>
<dbReference type="HAMAP" id="MF_00006">
    <property type="entry name" value="Arg_succ_lyase"/>
    <property type="match status" value="1"/>
</dbReference>
<dbReference type="InterPro" id="IPR029419">
    <property type="entry name" value="Arg_succ_lyase_C"/>
</dbReference>
<dbReference type="InterPro" id="IPR009049">
    <property type="entry name" value="Argininosuccinate_lyase"/>
</dbReference>
<dbReference type="InterPro" id="IPR024083">
    <property type="entry name" value="Fumarase/histidase_N"/>
</dbReference>
<dbReference type="InterPro" id="IPR020557">
    <property type="entry name" value="Fumarate_lyase_CS"/>
</dbReference>
<dbReference type="InterPro" id="IPR000362">
    <property type="entry name" value="Fumarate_lyase_fam"/>
</dbReference>
<dbReference type="InterPro" id="IPR022761">
    <property type="entry name" value="Fumarate_lyase_N"/>
</dbReference>
<dbReference type="InterPro" id="IPR008948">
    <property type="entry name" value="L-Aspartase-like"/>
</dbReference>
<dbReference type="NCBIfam" id="TIGR00838">
    <property type="entry name" value="argH"/>
    <property type="match status" value="1"/>
</dbReference>
<dbReference type="NCBIfam" id="NF008964">
    <property type="entry name" value="PRK12308.1"/>
    <property type="match status" value="1"/>
</dbReference>
<dbReference type="PANTHER" id="PTHR43814">
    <property type="entry name" value="ARGININOSUCCINATE LYASE"/>
    <property type="match status" value="1"/>
</dbReference>
<dbReference type="PANTHER" id="PTHR43814:SF1">
    <property type="entry name" value="ARGININOSUCCINATE LYASE"/>
    <property type="match status" value="1"/>
</dbReference>
<dbReference type="Pfam" id="PF14698">
    <property type="entry name" value="ASL_C2"/>
    <property type="match status" value="1"/>
</dbReference>
<dbReference type="Pfam" id="PF00206">
    <property type="entry name" value="Lyase_1"/>
    <property type="match status" value="1"/>
</dbReference>
<dbReference type="PRINTS" id="PR00145">
    <property type="entry name" value="ARGSUCLYASE"/>
</dbReference>
<dbReference type="PRINTS" id="PR00149">
    <property type="entry name" value="FUMRATELYASE"/>
</dbReference>
<dbReference type="SUPFAM" id="SSF48557">
    <property type="entry name" value="L-aspartase-like"/>
    <property type="match status" value="1"/>
</dbReference>
<dbReference type="PROSITE" id="PS00163">
    <property type="entry name" value="FUMARATE_LYASES"/>
    <property type="match status" value="1"/>
</dbReference>
<feature type="chain" id="PRO_1000000544" description="Argininosuccinate lyase">
    <location>
        <begin position="1"/>
        <end position="457"/>
    </location>
</feature>
<accession>Q0SY34</accession>
<protein>
    <recommendedName>
        <fullName evidence="1">Argininosuccinate lyase</fullName>
        <shortName evidence="1">ASAL</shortName>
        <ecNumber evidence="1">4.3.2.1</ecNumber>
    </recommendedName>
    <alternativeName>
        <fullName evidence="1">Arginosuccinase</fullName>
    </alternativeName>
</protein>
<gene>
    <name evidence="1" type="primary">argH</name>
    <name type="ordered locus">SFV_4029</name>
</gene>
<organism>
    <name type="scientific">Shigella flexneri serotype 5b (strain 8401)</name>
    <dbReference type="NCBI Taxonomy" id="373384"/>
    <lineage>
        <taxon>Bacteria</taxon>
        <taxon>Pseudomonadati</taxon>
        <taxon>Pseudomonadota</taxon>
        <taxon>Gammaproteobacteria</taxon>
        <taxon>Enterobacterales</taxon>
        <taxon>Enterobacteriaceae</taxon>
        <taxon>Shigella</taxon>
    </lineage>
</organism>
<comment type="catalytic activity">
    <reaction evidence="1">
        <text>2-(N(omega)-L-arginino)succinate = fumarate + L-arginine</text>
        <dbReference type="Rhea" id="RHEA:24020"/>
        <dbReference type="ChEBI" id="CHEBI:29806"/>
        <dbReference type="ChEBI" id="CHEBI:32682"/>
        <dbReference type="ChEBI" id="CHEBI:57472"/>
        <dbReference type="EC" id="4.3.2.1"/>
    </reaction>
</comment>
<comment type="pathway">
    <text evidence="1">Amino-acid biosynthesis; L-arginine biosynthesis; L-arginine from L-ornithine and carbamoyl phosphate: step 3/3.</text>
</comment>
<comment type="subcellular location">
    <subcellularLocation>
        <location evidence="1">Cytoplasm</location>
    </subcellularLocation>
</comment>
<comment type="similarity">
    <text evidence="1">Belongs to the lyase 1 family. Argininosuccinate lyase subfamily.</text>
</comment>